<comment type="function">
    <text evidence="2 8">Cytochrome P450 monooxygenase that catalyzes regio- and stereospecific hydroxylation of cholesterol and its derivatives. Hydroxylates (with R stereochemistry) the terminal methyl group of cholesterol side-chain in a three step reaction to yield at first a C26 alcohol, then a C26 aldehyde and finally a C26 acid. Regulates cholesterol homeostasis by catalyzing the conversion of excess cholesterol to bile acids via both the 'neutral' (classic) and the 'acid' (alternative) pathways. May also regulate cholesterol homeostasis via generation of active oxysterols, which act as ligands for NR1H2 and NR1H3 nuclear receptors, modulating the transcription of genes involved in lipid metabolism. Plays a role in cholestanol metabolism in the cerebellum. Similarly to cholesterol, hydroxylates cholestanol and may facilitate sterol diffusion through the blood-brain barrier to the systemic circulation for further degradation. Also hydroxylates retinal 7-ketocholesterol, a noxious oxysterol with pro-inflammatory and pro-apoptotic effects, and may play a role in its elimination from the retinal pigment epithelium. May play a redundant role in vitamin D biosynthesis (By similarity). Catalyzes 25-hydroxylation of vitamin D3 that is required for its conversion to a functionally active form (PubMed:2175615).</text>
</comment>
<comment type="catalytic activity">
    <reaction evidence="1 2">
        <text>5beta-cholestane-3alpha,7alpha,12alpha-triol + 6 reduced [adrenodoxin] + 3 O2 + 5 H(+) = (25R)-3alpha,7alpha,12alpha-trihydroxy-5beta-cholestan-26-oate + 6 oxidized [adrenodoxin] + 4 H2O</text>
        <dbReference type="Rhea" id="RHEA:34631"/>
        <dbReference type="Rhea" id="RHEA-COMP:9998"/>
        <dbReference type="Rhea" id="RHEA-COMP:9999"/>
        <dbReference type="ChEBI" id="CHEBI:15377"/>
        <dbReference type="ChEBI" id="CHEBI:15378"/>
        <dbReference type="ChEBI" id="CHEBI:15379"/>
        <dbReference type="ChEBI" id="CHEBI:16496"/>
        <dbReference type="ChEBI" id="CHEBI:33737"/>
        <dbReference type="ChEBI" id="CHEBI:33738"/>
        <dbReference type="ChEBI" id="CHEBI:58734"/>
        <dbReference type="EC" id="1.14.15.15"/>
    </reaction>
    <physiologicalReaction direction="left-to-right" evidence="2">
        <dbReference type="Rhea" id="RHEA:34632"/>
    </physiologicalReaction>
</comment>
<comment type="catalytic activity">
    <reaction evidence="2">
        <text>cholestanol + 2 reduced [adrenodoxin] + O2 + 2 H(+) = (25R)-26-hydroxycholestanol + 2 oxidized [adrenodoxin] + H2O</text>
        <dbReference type="Rhea" id="RHEA:53812"/>
        <dbReference type="Rhea" id="RHEA-COMP:9998"/>
        <dbReference type="Rhea" id="RHEA-COMP:9999"/>
        <dbReference type="ChEBI" id="CHEBI:15377"/>
        <dbReference type="ChEBI" id="CHEBI:15378"/>
        <dbReference type="ChEBI" id="CHEBI:15379"/>
        <dbReference type="ChEBI" id="CHEBI:33737"/>
        <dbReference type="ChEBI" id="CHEBI:33738"/>
        <dbReference type="ChEBI" id="CHEBI:86570"/>
        <dbReference type="ChEBI" id="CHEBI:137688"/>
    </reaction>
    <physiologicalReaction direction="left-to-right" evidence="2">
        <dbReference type="Rhea" id="RHEA:53813"/>
    </physiologicalReaction>
</comment>
<comment type="catalytic activity">
    <reaction evidence="2">
        <text>(25R)-3beta-hydroxycholest-5-en-7-one-26-al + 2 reduced [adrenodoxin] + O2 + H(+) = (25R)-3beta-hydroxycholest-5-en-7-one-26-oate + 2 oxidized [adrenodoxin] + H2O</text>
        <dbReference type="Rhea" id="RHEA:47380"/>
        <dbReference type="Rhea" id="RHEA-COMP:9998"/>
        <dbReference type="Rhea" id="RHEA-COMP:9999"/>
        <dbReference type="ChEBI" id="CHEBI:15377"/>
        <dbReference type="ChEBI" id="CHEBI:15378"/>
        <dbReference type="ChEBI" id="CHEBI:15379"/>
        <dbReference type="ChEBI" id="CHEBI:33737"/>
        <dbReference type="ChEBI" id="CHEBI:33738"/>
        <dbReference type="ChEBI" id="CHEBI:87677"/>
        <dbReference type="ChEBI" id="CHEBI:87678"/>
    </reaction>
    <physiologicalReaction direction="left-to-right" evidence="2">
        <dbReference type="Rhea" id="RHEA:47381"/>
    </physiologicalReaction>
</comment>
<comment type="catalytic activity">
    <reaction evidence="2">
        <text>(25R)-3beta,26-dihydroxycholest-5-en-7-one + 2 reduced [adrenodoxin] + O2 + 2 H(+) = (25R)-3beta-hydroxycholest-5-en-7-one-26-al + 2 oxidized [adrenodoxin] + 2 H2O</text>
        <dbReference type="Rhea" id="RHEA:47376"/>
        <dbReference type="Rhea" id="RHEA-COMP:9998"/>
        <dbReference type="Rhea" id="RHEA-COMP:9999"/>
        <dbReference type="ChEBI" id="CHEBI:15377"/>
        <dbReference type="ChEBI" id="CHEBI:15378"/>
        <dbReference type="ChEBI" id="CHEBI:15379"/>
        <dbReference type="ChEBI" id="CHEBI:33737"/>
        <dbReference type="ChEBI" id="CHEBI:33738"/>
        <dbReference type="ChEBI" id="CHEBI:87653"/>
        <dbReference type="ChEBI" id="CHEBI:87677"/>
    </reaction>
    <physiologicalReaction direction="left-to-right" evidence="2">
        <dbReference type="Rhea" id="RHEA:47377"/>
    </physiologicalReaction>
</comment>
<comment type="catalytic activity">
    <reaction evidence="2">
        <text>7-oxocholesterol + 2 reduced [adrenodoxin] + O2 + 2 H(+) = (25R)-3beta,26-dihydroxycholest-5-en-7-one + 2 oxidized [adrenodoxin] + H2O</text>
        <dbReference type="Rhea" id="RHEA:47344"/>
        <dbReference type="Rhea" id="RHEA-COMP:9998"/>
        <dbReference type="Rhea" id="RHEA-COMP:9999"/>
        <dbReference type="ChEBI" id="CHEBI:15377"/>
        <dbReference type="ChEBI" id="CHEBI:15378"/>
        <dbReference type="ChEBI" id="CHEBI:15379"/>
        <dbReference type="ChEBI" id="CHEBI:33737"/>
        <dbReference type="ChEBI" id="CHEBI:33738"/>
        <dbReference type="ChEBI" id="CHEBI:64294"/>
        <dbReference type="ChEBI" id="CHEBI:87653"/>
    </reaction>
    <physiologicalReaction direction="left-to-right" evidence="2">
        <dbReference type="Rhea" id="RHEA:47345"/>
    </physiologicalReaction>
</comment>
<comment type="catalytic activity">
    <reaction evidence="8">
        <text>calciol + 2 reduced [adrenodoxin] + O2 + 2 H(+) = calcidiol + 2 oxidized [adrenodoxin] + H2O</text>
        <dbReference type="Rhea" id="RHEA:46588"/>
        <dbReference type="Rhea" id="RHEA-COMP:9998"/>
        <dbReference type="Rhea" id="RHEA-COMP:9999"/>
        <dbReference type="ChEBI" id="CHEBI:15377"/>
        <dbReference type="ChEBI" id="CHEBI:15378"/>
        <dbReference type="ChEBI" id="CHEBI:15379"/>
        <dbReference type="ChEBI" id="CHEBI:17933"/>
        <dbReference type="ChEBI" id="CHEBI:28940"/>
        <dbReference type="ChEBI" id="CHEBI:33737"/>
        <dbReference type="ChEBI" id="CHEBI:33738"/>
    </reaction>
    <physiologicalReaction direction="left-to-right" evidence="11">
        <dbReference type="Rhea" id="RHEA:46589"/>
    </physiologicalReaction>
</comment>
<comment type="catalytic activity">
    <reaction evidence="2">
        <text>(25R)-5beta-cholestane-3alpha,7alpha,12alpha,26-tetrol + 2 reduced [adrenodoxin] + O2 + 2 H(+) = (25R)-3alpha,7alpha,12alpha-trihydroxy-5beta-cholestan-26-al + 2 oxidized [adrenodoxin] + 2 H2O</text>
        <dbReference type="Rhea" id="RHEA:40231"/>
        <dbReference type="Rhea" id="RHEA-COMP:9998"/>
        <dbReference type="Rhea" id="RHEA-COMP:9999"/>
        <dbReference type="ChEBI" id="CHEBI:15377"/>
        <dbReference type="ChEBI" id="CHEBI:15378"/>
        <dbReference type="ChEBI" id="CHEBI:15379"/>
        <dbReference type="ChEBI" id="CHEBI:33737"/>
        <dbReference type="ChEBI" id="CHEBI:33738"/>
        <dbReference type="ChEBI" id="CHEBI:48939"/>
        <dbReference type="ChEBI" id="CHEBI:48940"/>
    </reaction>
    <physiologicalReaction direction="left-to-right" evidence="2">
        <dbReference type="Rhea" id="RHEA:40232"/>
    </physiologicalReaction>
</comment>
<comment type="catalytic activity">
    <reaction evidence="8">
        <text>2 reduced [adrenodoxin] + cholesterol + O2 + 2 H(+) = (25R)-cholest-5-ene-3beta,26-diol + 2 oxidized [adrenodoxin] + H2O</text>
        <dbReference type="Rhea" id="RHEA:46400"/>
        <dbReference type="Rhea" id="RHEA-COMP:9998"/>
        <dbReference type="Rhea" id="RHEA-COMP:9999"/>
        <dbReference type="ChEBI" id="CHEBI:15377"/>
        <dbReference type="ChEBI" id="CHEBI:15378"/>
        <dbReference type="ChEBI" id="CHEBI:15379"/>
        <dbReference type="ChEBI" id="CHEBI:16113"/>
        <dbReference type="ChEBI" id="CHEBI:33737"/>
        <dbReference type="ChEBI" id="CHEBI:33738"/>
        <dbReference type="ChEBI" id="CHEBI:76591"/>
    </reaction>
    <physiologicalReaction direction="left-to-right" evidence="11">
        <dbReference type="Rhea" id="RHEA:46401"/>
    </physiologicalReaction>
</comment>
<comment type="catalytic activity">
    <reaction evidence="2">
        <text>(25R)-3beta,4beta-dihydroxycholest-5-en-26-al + 2 reduced [adrenodoxin] + O2 + H(+) = (25R)-3beta,4beta-dihydroxycholest-5-en-26-oate + 2 oxidized [adrenodoxin] + H2O</text>
        <dbReference type="Rhea" id="RHEA:46436"/>
        <dbReference type="Rhea" id="RHEA-COMP:9998"/>
        <dbReference type="Rhea" id="RHEA-COMP:9999"/>
        <dbReference type="ChEBI" id="CHEBI:15377"/>
        <dbReference type="ChEBI" id="CHEBI:15378"/>
        <dbReference type="ChEBI" id="CHEBI:15379"/>
        <dbReference type="ChEBI" id="CHEBI:33737"/>
        <dbReference type="ChEBI" id="CHEBI:33738"/>
        <dbReference type="ChEBI" id="CHEBI:86115"/>
        <dbReference type="ChEBI" id="CHEBI:86116"/>
    </reaction>
    <physiologicalReaction direction="left-to-right" evidence="2">
        <dbReference type="Rhea" id="RHEA:46437"/>
    </physiologicalReaction>
</comment>
<comment type="catalytic activity">
    <reaction evidence="2">
        <text>(25R)-4beta,26-dihydroxycholesterol + 2 reduced [adrenodoxin] + O2 + 2 H(+) = (25R)-3beta,4beta-dihydroxycholest-5-en-26-al + 2 oxidized [adrenodoxin] + 2 H2O</text>
        <dbReference type="Rhea" id="RHEA:46432"/>
        <dbReference type="Rhea" id="RHEA-COMP:9998"/>
        <dbReference type="Rhea" id="RHEA-COMP:9999"/>
        <dbReference type="ChEBI" id="CHEBI:15377"/>
        <dbReference type="ChEBI" id="CHEBI:15378"/>
        <dbReference type="ChEBI" id="CHEBI:15379"/>
        <dbReference type="ChEBI" id="CHEBI:33737"/>
        <dbReference type="ChEBI" id="CHEBI:33738"/>
        <dbReference type="ChEBI" id="CHEBI:86113"/>
        <dbReference type="ChEBI" id="CHEBI:86115"/>
    </reaction>
    <physiologicalReaction direction="left-to-right" evidence="2">
        <dbReference type="Rhea" id="RHEA:46433"/>
    </physiologicalReaction>
</comment>
<comment type="catalytic activity">
    <reaction evidence="2">
        <text>4beta-hydroxycholesterol + 2 reduced [adrenodoxin] + O2 + 2 H(+) = (25R)-4beta,26-dihydroxycholesterol + 2 oxidized [adrenodoxin] + H2O</text>
        <dbReference type="Rhea" id="RHEA:46428"/>
        <dbReference type="Rhea" id="RHEA-COMP:9998"/>
        <dbReference type="Rhea" id="RHEA-COMP:9999"/>
        <dbReference type="ChEBI" id="CHEBI:15377"/>
        <dbReference type="ChEBI" id="CHEBI:15378"/>
        <dbReference type="ChEBI" id="CHEBI:15379"/>
        <dbReference type="ChEBI" id="CHEBI:33737"/>
        <dbReference type="ChEBI" id="CHEBI:33738"/>
        <dbReference type="ChEBI" id="CHEBI:85778"/>
        <dbReference type="ChEBI" id="CHEBI:86113"/>
    </reaction>
    <physiologicalReaction direction="left-to-right" evidence="2">
        <dbReference type="Rhea" id="RHEA:46429"/>
    </physiologicalReaction>
</comment>
<comment type="catalytic activity">
    <reaction evidence="2">
        <text>(25R)-3beta-hydroxy-5-cholesten-26-al + 2 reduced [adrenodoxin] + O2 + H(+) = (25R)-3beta-hydroxy-5-cholestenoate + 2 oxidized [adrenodoxin] + H2O</text>
        <dbReference type="Rhea" id="RHEA:45236"/>
        <dbReference type="Rhea" id="RHEA-COMP:9998"/>
        <dbReference type="Rhea" id="RHEA-COMP:9999"/>
        <dbReference type="ChEBI" id="CHEBI:15377"/>
        <dbReference type="ChEBI" id="CHEBI:15378"/>
        <dbReference type="ChEBI" id="CHEBI:15379"/>
        <dbReference type="ChEBI" id="CHEBI:33737"/>
        <dbReference type="ChEBI" id="CHEBI:33738"/>
        <dbReference type="ChEBI" id="CHEBI:86096"/>
        <dbReference type="ChEBI" id="CHEBI:86098"/>
    </reaction>
    <physiologicalReaction direction="left-to-right" evidence="2">
        <dbReference type="Rhea" id="RHEA:45237"/>
    </physiologicalReaction>
</comment>
<comment type="catalytic activity">
    <reaction evidence="2">
        <text>(25R)-cholest-5-ene-3beta,26-diol + 2 reduced [adrenodoxin] + O2 + 2 H(+) = (25R)-3beta-hydroxy-5-cholesten-26-al + 2 oxidized [adrenodoxin] + 2 H2O</text>
        <dbReference type="Rhea" id="RHEA:46092"/>
        <dbReference type="Rhea" id="RHEA-COMP:9998"/>
        <dbReference type="Rhea" id="RHEA-COMP:9999"/>
        <dbReference type="ChEBI" id="CHEBI:15377"/>
        <dbReference type="ChEBI" id="CHEBI:15378"/>
        <dbReference type="ChEBI" id="CHEBI:15379"/>
        <dbReference type="ChEBI" id="CHEBI:33737"/>
        <dbReference type="ChEBI" id="CHEBI:33738"/>
        <dbReference type="ChEBI" id="CHEBI:76591"/>
        <dbReference type="ChEBI" id="CHEBI:86096"/>
    </reaction>
    <physiologicalReaction direction="left-to-right" evidence="2">
        <dbReference type="Rhea" id="RHEA:46093"/>
    </physiologicalReaction>
</comment>
<comment type="catalytic activity">
    <reaction evidence="2">
        <text>(25R)-3alpha,7alpha,12alpha-trihydroxy-5beta-cholestan-26-al + 2 reduced [adrenodoxin] + O2 + H(+) = (25R)-3alpha,7alpha,12alpha-trihydroxy-5beta-cholestan-26-oate + 2 oxidized [adrenodoxin] + H2O</text>
        <dbReference type="Rhea" id="RHEA:34627"/>
        <dbReference type="Rhea" id="RHEA-COMP:9998"/>
        <dbReference type="Rhea" id="RHEA-COMP:9999"/>
        <dbReference type="ChEBI" id="CHEBI:15377"/>
        <dbReference type="ChEBI" id="CHEBI:15378"/>
        <dbReference type="ChEBI" id="CHEBI:15379"/>
        <dbReference type="ChEBI" id="CHEBI:33737"/>
        <dbReference type="ChEBI" id="CHEBI:33738"/>
        <dbReference type="ChEBI" id="CHEBI:48940"/>
        <dbReference type="ChEBI" id="CHEBI:58734"/>
    </reaction>
    <physiologicalReaction direction="left-to-right" evidence="2">
        <dbReference type="Rhea" id="RHEA:34628"/>
    </physiologicalReaction>
</comment>
<comment type="catalytic activity">
    <reaction evidence="2">
        <text>5beta-cholestane-3alpha,7alpha,12alpha-triol + 2 reduced [adrenodoxin] + O2 + 2 H(+) = (25R)-5beta-cholestane-3alpha,7alpha,12alpha,26-tetrol + 2 oxidized [adrenodoxin] + H2O</text>
        <dbReference type="Rhea" id="RHEA:14373"/>
        <dbReference type="Rhea" id="RHEA-COMP:9998"/>
        <dbReference type="Rhea" id="RHEA-COMP:9999"/>
        <dbReference type="ChEBI" id="CHEBI:15377"/>
        <dbReference type="ChEBI" id="CHEBI:15378"/>
        <dbReference type="ChEBI" id="CHEBI:15379"/>
        <dbReference type="ChEBI" id="CHEBI:16496"/>
        <dbReference type="ChEBI" id="CHEBI:33737"/>
        <dbReference type="ChEBI" id="CHEBI:33738"/>
        <dbReference type="ChEBI" id="CHEBI:48939"/>
    </reaction>
    <physiologicalReaction direction="left-to-right" evidence="2">
        <dbReference type="Rhea" id="RHEA:14374"/>
    </physiologicalReaction>
</comment>
<comment type="cofactor">
    <cofactor evidence="1">
        <name>heme</name>
        <dbReference type="ChEBI" id="CHEBI:30413"/>
    </cofactor>
</comment>
<comment type="pathway">
    <text evidence="2">Hormone biosynthesis; cholecalciferol biosynthesis.</text>
</comment>
<comment type="pathway">
    <text evidence="2">Steroid metabolism; cholesterol degradation.</text>
</comment>
<comment type="pathway">
    <text evidence="2">Lipid metabolism; bile acid biosynthesis.</text>
</comment>
<comment type="subunit">
    <text evidence="7">Interacts with HSP70; this interaction is required for initial targeting to mitochondria.</text>
</comment>
<comment type="subcellular location">
    <subcellularLocation>
        <location evidence="12">Mitochondrion inner membrane</location>
        <topology evidence="12">Peripheral membrane protein</topology>
    </subcellularLocation>
    <text evidence="12">Post-translationally targeted to mitochondria. All three of the receptor proteins in the TOM complex, TOMM70, TOMM20 and TOMM22 are required for the translocation across the mitochondrial outer membrane. After translocation into the matrix, associates with the inner membrane as a membrane extrinsic protein.</text>
</comment>
<comment type="tissue specificity">
    <text evidence="6 8">Expressed in liver, kidney and ovary.</text>
</comment>
<comment type="similarity">
    <text evidence="11">Belongs to the cytochrome P450 family.</text>
</comment>
<comment type="sequence caution" evidence="11">
    <conflict type="erroneous initiation">
        <sequence resource="EMBL-CDS" id="AAA86314"/>
    </conflict>
</comment>
<feature type="transit peptide" description="Mitochondrion" evidence="9">
    <location>
        <begin position="1"/>
        <end position="32"/>
    </location>
</feature>
<feature type="chain" id="PRO_0000003621" description="Sterol 26-hydroxylase, mitochondrial">
    <location>
        <begin position="33"/>
        <end position="533"/>
    </location>
</feature>
<feature type="region of interest" description="Disordered" evidence="5">
    <location>
        <begin position="38"/>
        <end position="58"/>
    </location>
</feature>
<feature type="region of interest" description="Sterol-binding" evidence="4">
    <location>
        <begin position="386"/>
        <end position="400"/>
    </location>
</feature>
<feature type="binding site" description="axial binding residue">
    <location>
        <position position="479"/>
    </location>
    <ligand>
        <name>heme</name>
        <dbReference type="ChEBI" id="CHEBI:30413"/>
    </ligand>
    <ligandPart>
        <name>Fe</name>
        <dbReference type="ChEBI" id="CHEBI:18248"/>
    </ligandPart>
</feature>
<feature type="modified residue" description="N6-acetyllysine" evidence="3">
    <location>
        <position position="142"/>
    </location>
</feature>
<feature type="modified residue" description="N6-acetyllysine" evidence="3">
    <location>
        <position position="375"/>
    </location>
</feature>
<feature type="modified residue" description="N6-acetyllysine" evidence="3">
    <location>
        <position position="512"/>
    </location>
</feature>
<feature type="modified residue" description="N6-acetyllysine" evidence="3">
    <location>
        <position position="523"/>
    </location>
</feature>
<feature type="sequence conflict" description="In Ref. 4; AAA86314." evidence="11" ref="4">
    <location>
        <begin position="88"/>
        <end position="96"/>
    </location>
</feature>
<feature type="sequence conflict" description="In Ref. 3; AAA41786 and 4; AAA86314." evidence="11" ref="3 4">
    <original>ML</original>
    <variation>IV</variation>
    <location>
        <begin position="167"/>
        <end position="168"/>
    </location>
</feature>
<feature type="sequence conflict" description="In Ref. 3; AAA41786 and 4; AAA86314." evidence="11" ref="3 4">
    <original>H</original>
    <variation>N</variation>
    <location>
        <position position="209"/>
    </location>
</feature>
<feature type="sequence conflict" description="In Ref. 4; AAA86314." evidence="11" ref="4">
    <original>E</original>
    <variation>H</variation>
    <location>
        <position position="358"/>
    </location>
</feature>
<feature type="sequence conflict" description="In Ref. 4; AAA86314." evidence="11" ref="4">
    <location>
        <position position="364"/>
    </location>
</feature>
<feature type="sequence conflict" description="In Ref. 4; AAA86314." evidence="11" ref="4">
    <original>K</original>
    <variation>P</variation>
    <location>
        <position position="393"/>
    </location>
</feature>
<feature type="sequence conflict" description="In Ref. 2; AAB02287." evidence="11" ref="2">
    <original>H</original>
    <variation>T</variation>
    <location>
        <position position="431"/>
    </location>
</feature>
<protein>
    <recommendedName>
        <fullName evidence="10">Sterol 26-hydroxylase, mitochondrial</fullName>
        <ecNumber evidence="1 2">1.14.15.15</ecNumber>
    </recommendedName>
    <alternativeName>
        <fullName>5-beta-cholestane-3-alpha,7-alpha,12-alpha-triol 26-hydroxylase</fullName>
    </alternativeName>
    <alternativeName>
        <fullName>Cytochrome P-450C27/25</fullName>
    </alternativeName>
    <alternativeName>
        <fullName>Cytochrome P450 27</fullName>
    </alternativeName>
    <alternativeName>
        <fullName evidence="2">Sterol 27-hydroxylase</fullName>
    </alternativeName>
    <alternativeName>
        <fullName evidence="10">Vitamin D(3) 25-hydroxylase</fullName>
    </alternativeName>
</protein>
<reference key="1">
    <citation type="journal article" date="1990" name="FEBS Lett.">
        <title>Molecular cloning of cDNA for vitamin D3 25-hydroxylase from rat liver mitochondria.</title>
        <authorList>
            <person name="Usui E."/>
            <person name="Noshiro M."/>
            <person name="Okuda K."/>
        </authorList>
    </citation>
    <scope>NUCLEOTIDE SEQUENCE [GENOMIC DNA]</scope>
    <scope>PROTEIN SEQUENCE OF 33-37</scope>
    <source>
        <strain>Wistar</strain>
        <tissue>Liver</tissue>
    </source>
</reference>
<reference key="2">
    <citation type="journal article" date="1990" name="DNA Cell Biol.">
        <title>A cDNA encoding a rat mitochondrial cytochrome P450 catalyzing both the 26-hydroxylation of cholesterol and 25-hydroxylation of vitamin D3: gonadotropic regulation of the cognate mRNA in ovaries.</title>
        <authorList>
            <person name="Su P."/>
            <person name="Rennert H."/>
            <person name="Shayiq R.M."/>
            <person name="Yamamoto R."/>
            <person name="Zheng Y.-M."/>
            <person name="Addya S."/>
            <person name="Strauss J.F. III"/>
            <person name="Avadhani N.G."/>
        </authorList>
    </citation>
    <scope>NUCLEOTIDE SEQUENCE [MRNA]</scope>
    <scope>CATALYTIC ACTIVITY</scope>
    <scope>FUNCTION</scope>
    <scope>TISSUE SPECIFICITY</scope>
    <source>
        <tissue>Liver</tissue>
    </source>
</reference>
<reference key="3">
    <citation type="journal article" date="1992" name="J. Biol. Chem.">
        <title>Sequence complementarity between the 5'-terminal regions of mRNAs for rat mitochondrial cytochrome P-450c27/25 and a growth hormone-inducible serine protease inhibitor. A possible gene overlap.</title>
        <authorList>
            <person name="Shayiq R.M."/>
            <person name="Avadhani N.G."/>
        </authorList>
    </citation>
    <scope>NUCLEOTIDE SEQUENCE [MRNA]</scope>
    <scope>TISSUE SPECIFICITY</scope>
    <source>
        <tissue>Liver</tissue>
    </source>
</reference>
<reference key="4">
    <citation type="journal article" date="1995" name="Biochemistry">
        <title>Localization of a transcription promoter within the second exon of the cytochrome P-450c27/25 gene for the expression of the major species of two-kilobase mRNA.</title>
        <authorList>
            <person name="Mullick J."/>
            <person name="Addya S."/>
            <person name="Sucharov C."/>
            <person name="Avadhani N.G."/>
        </authorList>
    </citation>
    <scope>NUCLEOTIDE SEQUENCE [GENOMIC DNA]</scope>
</reference>
<reference key="5">
    <citation type="journal article" date="2004" name="Genome Res.">
        <title>The status, quality, and expansion of the NIH full-length cDNA project: the Mammalian Gene Collection (MGC).</title>
        <authorList>
            <consortium name="The MGC Project Team"/>
        </authorList>
    </citation>
    <scope>NUCLEOTIDE SEQUENCE [LARGE SCALE MRNA]</scope>
    <source>
        <tissue>Prostate</tissue>
    </source>
</reference>
<reference key="6">
    <citation type="journal article" date="2009" name="J. Biol. Chem.">
        <title>Mitochondrial targeting of cytochrome P450 proteins containing NH2-terminal chimeric signals involves an unusual TOM20/TOM22 bypass mechanism.</title>
        <authorList>
            <person name="Anandatheerthavarada H.K."/>
            <person name="Sepuri N.B."/>
            <person name="Avadhani N.G."/>
        </authorList>
    </citation>
    <scope>SUBCELLULAR LOCATION</scope>
    <scope>INTERACTION WITH HSP70</scope>
    <scope>TOPOLOGY</scope>
</reference>
<keyword id="KW-0007">Acetylation</keyword>
<keyword id="KW-0153">Cholesterol metabolism</keyword>
<keyword id="KW-0903">Direct protein sequencing</keyword>
<keyword id="KW-0349">Heme</keyword>
<keyword id="KW-0408">Iron</keyword>
<keyword id="KW-0444">Lipid biosynthesis</keyword>
<keyword id="KW-0443">Lipid metabolism</keyword>
<keyword id="KW-0472">Membrane</keyword>
<keyword id="KW-0479">Metal-binding</keyword>
<keyword id="KW-0496">Mitochondrion</keyword>
<keyword id="KW-0999">Mitochondrion inner membrane</keyword>
<keyword id="KW-0503">Monooxygenase</keyword>
<keyword id="KW-0560">Oxidoreductase</keyword>
<keyword id="KW-1185">Reference proteome</keyword>
<keyword id="KW-0752">Steroid biosynthesis</keyword>
<keyword id="KW-0753">Steroid metabolism</keyword>
<keyword id="KW-1207">Sterol metabolism</keyword>
<keyword id="KW-0809">Transit peptide</keyword>
<sequence>MAVLSRMRLRWALLDTRVMGHGLCPQGARAKAAIPAALRDHESTEGPGTGQDRPRLRSLAELPGPGTLRFLFQLFLRGYVLHLHELQALNKAKYGPMWTTTFGTRTNVNLASAPLLEQVMRQEGKYPIRDSMEQWKEHRDHKGLSYGIFITQGQQWYHLRHSLNQRMLKPAEAALYTDALNEVISDFIARLDQVRTESASGDQVPDVAHLLYHLALEAICYILFEKRVGCLEPSIPEDTATFIRSVGLMFKNSVYVTFLPKWSRPLLPFWKRYMNNWDNIFSFGEKMIHQKVQEIEAQLQAAGPDGVQVSGYLHFLLTKELLSPQETVGTFPELILAGVDTTSNTLTWALYHLSKNPEIQEALHKEVTGVVPFGKVPQNKDFAHMPLLKAVIKETLRLYPVVPTNSRIITEKETEINGFLFPKNTQFVLCHYVVSRDPSVFPEPESFQPHRWLRKREDDNSGIQHPFGSVPFGYGVRSCLGRRIAELEMQLLLSRLIQKYEVVLSPGMGEVKSVSRIVLVPSKKVSLRFLQRQ</sequence>
<accession>P17178</accession>
<accession>Q64615</accession>
<accession>Q64639</accession>
<evidence type="ECO:0000250" key="1">
    <source>
        <dbReference type="UniProtKB" id="P17177"/>
    </source>
</evidence>
<evidence type="ECO:0000250" key="2">
    <source>
        <dbReference type="UniProtKB" id="Q02318"/>
    </source>
</evidence>
<evidence type="ECO:0000250" key="3">
    <source>
        <dbReference type="UniProtKB" id="Q9DBG1"/>
    </source>
</evidence>
<evidence type="ECO:0000255" key="4"/>
<evidence type="ECO:0000256" key="5">
    <source>
        <dbReference type="SAM" id="MobiDB-lite"/>
    </source>
</evidence>
<evidence type="ECO:0000269" key="6">
    <source>
    </source>
</evidence>
<evidence type="ECO:0000269" key="7">
    <source>
    </source>
</evidence>
<evidence type="ECO:0000269" key="8">
    <source>
    </source>
</evidence>
<evidence type="ECO:0000269" key="9">
    <source>
    </source>
</evidence>
<evidence type="ECO:0000303" key="10">
    <source>
    </source>
</evidence>
<evidence type="ECO:0000305" key="11"/>
<evidence type="ECO:0000305" key="12">
    <source>
    </source>
</evidence>
<proteinExistence type="evidence at protein level"/>
<name>CP27A_RAT</name>
<dbReference type="EC" id="1.14.15.15" evidence="1 2"/>
<dbReference type="EMBL" id="Y07534">
    <property type="protein sequence ID" value="CAA68822.1"/>
    <property type="molecule type" value="Genomic_DNA"/>
</dbReference>
<dbReference type="EMBL" id="M38566">
    <property type="protein sequence ID" value="AAB02287.1"/>
    <property type="molecule type" value="mRNA"/>
</dbReference>
<dbReference type="EMBL" id="M73231">
    <property type="protein sequence ID" value="AAA41786.1"/>
    <property type="molecule type" value="mRNA"/>
</dbReference>
<dbReference type="EMBL" id="U17375">
    <property type="protein sequence ID" value="AAA86314.1"/>
    <property type="status" value="ALT_INIT"/>
    <property type="molecule type" value="Genomic_DNA"/>
</dbReference>
<dbReference type="EMBL" id="U17363">
    <property type="protein sequence ID" value="AAA86314.1"/>
    <property type="status" value="JOINED"/>
    <property type="molecule type" value="Genomic_DNA"/>
</dbReference>
<dbReference type="EMBL" id="U17369">
    <property type="protein sequence ID" value="AAA86314.1"/>
    <property type="status" value="JOINED"/>
    <property type="molecule type" value="Genomic_DNA"/>
</dbReference>
<dbReference type="EMBL" id="U17370">
    <property type="protein sequence ID" value="AAA86314.1"/>
    <property type="status" value="JOINED"/>
    <property type="molecule type" value="Genomic_DNA"/>
</dbReference>
<dbReference type="EMBL" id="U17371">
    <property type="protein sequence ID" value="AAA86314.1"/>
    <property type="status" value="JOINED"/>
    <property type="molecule type" value="Genomic_DNA"/>
</dbReference>
<dbReference type="EMBL" id="U17372">
    <property type="protein sequence ID" value="AAA86314.1"/>
    <property type="status" value="JOINED"/>
    <property type="molecule type" value="Genomic_DNA"/>
</dbReference>
<dbReference type="EMBL" id="U17373">
    <property type="protein sequence ID" value="AAA86314.1"/>
    <property type="status" value="JOINED"/>
    <property type="molecule type" value="Genomic_DNA"/>
</dbReference>
<dbReference type="EMBL" id="U17374">
    <property type="protein sequence ID" value="AAA86314.1"/>
    <property type="status" value="JOINED"/>
    <property type="molecule type" value="Genomic_DNA"/>
</dbReference>
<dbReference type="EMBL" id="U17376">
    <property type="protein sequence ID" value="AAA86314.1"/>
    <property type="status" value="JOINED"/>
    <property type="molecule type" value="Genomic_DNA"/>
</dbReference>
<dbReference type="EMBL" id="BC061848">
    <property type="protein sequence ID" value="AAH61848.1"/>
    <property type="molecule type" value="mRNA"/>
</dbReference>
<dbReference type="PIR" id="B42324">
    <property type="entry name" value="B42324"/>
</dbReference>
<dbReference type="PIR" id="S09198">
    <property type="entry name" value="O4RTV3"/>
</dbReference>
<dbReference type="RefSeq" id="NP_849178.2">
    <property type="nucleotide sequence ID" value="NM_178847.3"/>
</dbReference>
<dbReference type="SMR" id="P17178"/>
<dbReference type="BioGRID" id="256990">
    <property type="interactions" value="1"/>
</dbReference>
<dbReference type="FunCoup" id="P17178">
    <property type="interactions" value="242"/>
</dbReference>
<dbReference type="STRING" id="10116.ENSRNOP00000023152"/>
<dbReference type="PhosphoSitePlus" id="P17178"/>
<dbReference type="PaxDb" id="10116-ENSRNOP00000023152"/>
<dbReference type="GeneID" id="301517"/>
<dbReference type="KEGG" id="rno:301517"/>
<dbReference type="UCSC" id="RGD:727915">
    <property type="organism name" value="rat"/>
</dbReference>
<dbReference type="AGR" id="RGD:727915"/>
<dbReference type="CTD" id="1593"/>
<dbReference type="RGD" id="727915">
    <property type="gene designation" value="Cyp27a1"/>
</dbReference>
<dbReference type="eggNOG" id="KOG0159">
    <property type="taxonomic scope" value="Eukaryota"/>
</dbReference>
<dbReference type="HOGENOM" id="CLU_001570_28_3_1"/>
<dbReference type="InParanoid" id="P17178"/>
<dbReference type="OrthoDB" id="39818at9989"/>
<dbReference type="PhylomeDB" id="P17178"/>
<dbReference type="TreeFam" id="TF105094"/>
<dbReference type="BioCyc" id="MetaCyc:MONOMER-14308"/>
<dbReference type="BRENDA" id="1.14.15.15">
    <property type="organism ID" value="5301"/>
</dbReference>
<dbReference type="Reactome" id="R-RNO-193368">
    <property type="pathway name" value="Synthesis of bile acids and bile salts via 7alpha-hydroxycholesterol"/>
</dbReference>
<dbReference type="Reactome" id="R-RNO-193775">
    <property type="pathway name" value="Synthesis of bile acids and bile salts via 24-hydroxycholesterol"/>
</dbReference>
<dbReference type="Reactome" id="R-RNO-193807">
    <property type="pathway name" value="Synthesis of bile acids and bile salts via 27-hydroxycholesterol"/>
</dbReference>
<dbReference type="Reactome" id="R-RNO-211976">
    <property type="pathway name" value="Endogenous sterols"/>
</dbReference>
<dbReference type="SABIO-RK" id="P17178"/>
<dbReference type="UniPathway" id="UPA00221"/>
<dbReference type="UniPathway" id="UPA00955"/>
<dbReference type="UniPathway" id="UPA01058"/>
<dbReference type="PRO" id="PR:P17178"/>
<dbReference type="Proteomes" id="UP000002494">
    <property type="component" value="Unplaced"/>
</dbReference>
<dbReference type="GO" id="GO:0005743">
    <property type="term" value="C:mitochondrial inner membrane"/>
    <property type="evidence" value="ECO:0000314"/>
    <property type="project" value="UniProtKB"/>
</dbReference>
<dbReference type="GO" id="GO:0005739">
    <property type="term" value="C:mitochondrion"/>
    <property type="evidence" value="ECO:0000318"/>
    <property type="project" value="GO_Central"/>
</dbReference>
<dbReference type="GO" id="GO:0047748">
    <property type="term" value="F:cholestanetetraol 26-dehydrogenase activity"/>
    <property type="evidence" value="ECO:0000250"/>
    <property type="project" value="UniProtKB"/>
</dbReference>
<dbReference type="GO" id="GO:0031073">
    <property type="term" value="F:cholesterol 26-hydroxylase activity"/>
    <property type="evidence" value="ECO:0000314"/>
    <property type="project" value="RGD"/>
</dbReference>
<dbReference type="GO" id="GO:0008123">
    <property type="term" value="F:cholesterol 7-alpha-monooxygenase activity"/>
    <property type="evidence" value="ECO:0000250"/>
    <property type="project" value="UniProtKB"/>
</dbReference>
<dbReference type="GO" id="GO:0008386">
    <property type="term" value="F:cholesterol monooxygenase (side-chain-cleaving) activity"/>
    <property type="evidence" value="ECO:0000250"/>
    <property type="project" value="UniProtKB"/>
</dbReference>
<dbReference type="GO" id="GO:0020037">
    <property type="term" value="F:heme binding"/>
    <property type="evidence" value="ECO:0000250"/>
    <property type="project" value="UniProtKB"/>
</dbReference>
<dbReference type="GO" id="GO:0030544">
    <property type="term" value="F:Hsp70 protein binding"/>
    <property type="evidence" value="ECO:0000314"/>
    <property type="project" value="UniProtKB"/>
</dbReference>
<dbReference type="GO" id="GO:0005506">
    <property type="term" value="F:iron ion binding"/>
    <property type="evidence" value="ECO:0007669"/>
    <property type="project" value="InterPro"/>
</dbReference>
<dbReference type="GO" id="GO:0030343">
    <property type="term" value="F:vitamin D3 25-hydroxylase activity"/>
    <property type="evidence" value="ECO:0000314"/>
    <property type="project" value="RGD"/>
</dbReference>
<dbReference type="GO" id="GO:0006699">
    <property type="term" value="P:bile acid biosynthetic process"/>
    <property type="evidence" value="ECO:0000250"/>
    <property type="project" value="UniProtKB"/>
</dbReference>
<dbReference type="GO" id="GO:0006700">
    <property type="term" value="P:C21-steroid hormone biosynthetic process"/>
    <property type="evidence" value="ECO:0000250"/>
    <property type="project" value="UniProtKB"/>
</dbReference>
<dbReference type="GO" id="GO:0036378">
    <property type="term" value="P:calcitriol biosynthetic process from calciol"/>
    <property type="evidence" value="ECO:0000266"/>
    <property type="project" value="RGD"/>
</dbReference>
<dbReference type="GO" id="GO:0006707">
    <property type="term" value="P:cholesterol catabolic process"/>
    <property type="evidence" value="ECO:0000250"/>
    <property type="project" value="UniProtKB"/>
</dbReference>
<dbReference type="GO" id="GO:0008203">
    <property type="term" value="P:cholesterol metabolic process"/>
    <property type="evidence" value="ECO:0000314"/>
    <property type="project" value="RGD"/>
</dbReference>
<dbReference type="GO" id="GO:0006706">
    <property type="term" value="P:steroid catabolic process"/>
    <property type="evidence" value="ECO:0000304"/>
    <property type="project" value="RGD"/>
</dbReference>
<dbReference type="FunFam" id="1.10.630.10:FF:000006">
    <property type="entry name" value="Cytochrome P450 302a1, mitochondrial"/>
    <property type="match status" value="1"/>
</dbReference>
<dbReference type="Gene3D" id="1.10.630.10">
    <property type="entry name" value="Cytochrome P450"/>
    <property type="match status" value="1"/>
</dbReference>
<dbReference type="InterPro" id="IPR050479">
    <property type="entry name" value="CYP11_CYP27_families"/>
</dbReference>
<dbReference type="InterPro" id="IPR001128">
    <property type="entry name" value="Cyt_P450"/>
</dbReference>
<dbReference type="InterPro" id="IPR017972">
    <property type="entry name" value="Cyt_P450_CS"/>
</dbReference>
<dbReference type="InterPro" id="IPR002401">
    <property type="entry name" value="Cyt_P450_E_grp-I"/>
</dbReference>
<dbReference type="InterPro" id="IPR036396">
    <property type="entry name" value="Cyt_P450_sf"/>
</dbReference>
<dbReference type="PANTHER" id="PTHR24279">
    <property type="entry name" value="CYTOCHROME P450"/>
    <property type="match status" value="1"/>
</dbReference>
<dbReference type="PANTHER" id="PTHR24279:SF123">
    <property type="entry name" value="CYTOCHROME P450 FAMILY 27 SUBFAMILY A MEMBER 1"/>
    <property type="match status" value="1"/>
</dbReference>
<dbReference type="Pfam" id="PF00067">
    <property type="entry name" value="p450"/>
    <property type="match status" value="1"/>
</dbReference>
<dbReference type="PRINTS" id="PR00463">
    <property type="entry name" value="EP450I"/>
</dbReference>
<dbReference type="PRINTS" id="PR00385">
    <property type="entry name" value="P450"/>
</dbReference>
<dbReference type="SUPFAM" id="SSF48264">
    <property type="entry name" value="Cytochrome P450"/>
    <property type="match status" value="1"/>
</dbReference>
<dbReference type="PROSITE" id="PS00086">
    <property type="entry name" value="CYTOCHROME_P450"/>
    <property type="match status" value="1"/>
</dbReference>
<organism>
    <name type="scientific">Rattus norvegicus</name>
    <name type="common">Rat</name>
    <dbReference type="NCBI Taxonomy" id="10116"/>
    <lineage>
        <taxon>Eukaryota</taxon>
        <taxon>Metazoa</taxon>
        <taxon>Chordata</taxon>
        <taxon>Craniata</taxon>
        <taxon>Vertebrata</taxon>
        <taxon>Euteleostomi</taxon>
        <taxon>Mammalia</taxon>
        <taxon>Eutheria</taxon>
        <taxon>Euarchontoglires</taxon>
        <taxon>Glires</taxon>
        <taxon>Rodentia</taxon>
        <taxon>Myomorpha</taxon>
        <taxon>Muroidea</taxon>
        <taxon>Muridae</taxon>
        <taxon>Murinae</taxon>
        <taxon>Rattus</taxon>
    </lineage>
</organism>
<gene>
    <name type="primary">Cyp27a1</name>
    <name type="synonym">Cyp27</name>
</gene>